<reference key="1">
    <citation type="journal article" date="1993" name="J. Bacteriol.">
        <title>Identification of a novel operon in Lactococcus lactis encoding three enzymes for lactic acid synthesis: phosphofructokinase, pyruvate kinase, and lactate dehydrogenase.</title>
        <authorList>
            <person name="Llanos R.M."/>
            <person name="Harris C.J."/>
            <person name="Hillier A.J."/>
            <person name="Davidson B.E."/>
        </authorList>
    </citation>
    <scope>NUCLEOTIDE SEQUENCE [GENOMIC DNA]</scope>
    <source>
        <strain>LM0230</strain>
    </source>
</reference>
<reference key="2">
    <citation type="journal article" date="2001" name="Genome Res.">
        <title>The complete genome sequence of the lactic acid bacterium Lactococcus lactis ssp. lactis IL1403.</title>
        <authorList>
            <person name="Bolotin A."/>
            <person name="Wincker P."/>
            <person name="Mauger S."/>
            <person name="Jaillon O."/>
            <person name="Malarme K."/>
            <person name="Weissenbach J."/>
            <person name="Ehrlich S.D."/>
            <person name="Sorokin A."/>
        </authorList>
    </citation>
    <scope>NUCLEOTIDE SEQUENCE [LARGE SCALE GENOMIC DNA]</scope>
    <source>
        <strain>IL1403</strain>
    </source>
</reference>
<proteinExistence type="inferred from homology"/>
<protein>
    <recommendedName>
        <fullName>Pyruvate kinase</fullName>
        <shortName>PK</shortName>
        <ecNumber>2.7.1.40</ecNumber>
    </recommendedName>
</protein>
<organism>
    <name type="scientific">Lactococcus lactis subsp. lactis (strain IL1403)</name>
    <name type="common">Streptococcus lactis</name>
    <dbReference type="NCBI Taxonomy" id="272623"/>
    <lineage>
        <taxon>Bacteria</taxon>
        <taxon>Bacillati</taxon>
        <taxon>Bacillota</taxon>
        <taxon>Bacilli</taxon>
        <taxon>Lactobacillales</taxon>
        <taxon>Streptococcaceae</taxon>
        <taxon>Lactococcus</taxon>
    </lineage>
</organism>
<keyword id="KW-0021">Allosteric enzyme</keyword>
<keyword id="KW-0067">ATP-binding</keyword>
<keyword id="KW-0324">Glycolysis</keyword>
<keyword id="KW-0418">Kinase</keyword>
<keyword id="KW-0460">Magnesium</keyword>
<keyword id="KW-0479">Metal-binding</keyword>
<keyword id="KW-0547">Nucleotide-binding</keyword>
<keyword id="KW-0630">Potassium</keyword>
<keyword id="KW-0670">Pyruvate</keyword>
<keyword id="KW-1185">Reference proteome</keyword>
<keyword id="KW-0808">Transferase</keyword>
<feature type="chain" id="PRO_0000112077" description="Pyruvate kinase">
    <location>
        <begin position="1"/>
        <end position="502"/>
    </location>
</feature>
<feature type="binding site" evidence="1">
    <location>
        <position position="54"/>
    </location>
    <ligand>
        <name>substrate</name>
    </ligand>
</feature>
<feature type="binding site" evidence="2">
    <location>
        <begin position="56"/>
        <end position="59"/>
    </location>
    <ligand>
        <name>ATP</name>
        <dbReference type="ChEBI" id="CHEBI:30616"/>
    </ligand>
</feature>
<feature type="binding site" evidence="1">
    <location>
        <position position="56"/>
    </location>
    <ligand>
        <name>K(+)</name>
        <dbReference type="ChEBI" id="CHEBI:29103"/>
    </ligand>
</feature>
<feature type="binding site" evidence="1">
    <location>
        <position position="58"/>
    </location>
    <ligand>
        <name>K(+)</name>
        <dbReference type="ChEBI" id="CHEBI:29103"/>
    </ligand>
</feature>
<feature type="binding site" evidence="1">
    <location>
        <position position="88"/>
    </location>
    <ligand>
        <name>K(+)</name>
        <dbReference type="ChEBI" id="CHEBI:29103"/>
    </ligand>
</feature>
<feature type="binding site" evidence="1">
    <location>
        <position position="89"/>
    </location>
    <ligand>
        <name>K(+)</name>
        <dbReference type="ChEBI" id="CHEBI:29103"/>
    </ligand>
</feature>
<feature type="binding site" evidence="2">
    <location>
        <position position="95"/>
    </location>
    <ligand>
        <name>ATP</name>
        <dbReference type="ChEBI" id="CHEBI:30616"/>
    </ligand>
</feature>
<feature type="binding site" evidence="2">
    <location>
        <position position="184"/>
    </location>
    <ligand>
        <name>ATP</name>
        <dbReference type="ChEBI" id="CHEBI:30616"/>
    </ligand>
</feature>
<feature type="binding site" evidence="1">
    <location>
        <position position="252"/>
    </location>
    <ligand>
        <name>Mg(2+)</name>
        <dbReference type="ChEBI" id="CHEBI:18420"/>
    </ligand>
</feature>
<feature type="binding site" evidence="1">
    <location>
        <position position="275"/>
    </location>
    <ligand>
        <name>substrate</name>
    </ligand>
</feature>
<feature type="binding site" evidence="1">
    <location>
        <position position="276"/>
    </location>
    <ligand>
        <name>Mg(2+)</name>
        <dbReference type="ChEBI" id="CHEBI:18420"/>
    </ligand>
</feature>
<feature type="binding site" evidence="1">
    <location>
        <position position="276"/>
    </location>
    <ligand>
        <name>substrate</name>
    </ligand>
</feature>
<feature type="binding site" evidence="1">
    <location>
        <position position="308"/>
    </location>
    <ligand>
        <name>substrate</name>
    </ligand>
</feature>
<feature type="site" description="Transition state stabilizer" evidence="1">
    <location>
        <position position="250"/>
    </location>
</feature>
<feature type="sequence conflict" description="In Ref. 1; AAA99895." evidence="3" ref="1">
    <original>A</original>
    <variation>T</variation>
    <location>
        <position position="100"/>
    </location>
</feature>
<feature type="sequence conflict" description="In Ref. 1; AAA99895." evidence="3" ref="1">
    <original>A</original>
    <variation>S</variation>
    <location>
        <position position="105"/>
    </location>
</feature>
<feature type="sequence conflict" description="In Ref. 1; AAA99895." evidence="3" ref="1">
    <original>I</original>
    <variation>V</variation>
    <location>
        <position position="402"/>
    </location>
</feature>
<feature type="sequence conflict" description="In Ref. 1; AAA99895." evidence="3" ref="1">
    <original>N</original>
    <variation>D</variation>
    <location>
        <position position="424"/>
    </location>
</feature>
<feature type="sequence conflict" description="In Ref. 1; AAA99895." evidence="3" ref="1">
    <original>T</original>
    <variation>M</variation>
    <location>
        <position position="449"/>
    </location>
</feature>
<feature type="sequence conflict" description="In Ref. 1; AAA99895." evidence="3" ref="1">
    <original>S</original>
    <variation>A</variation>
    <location>
        <position position="455"/>
    </location>
</feature>
<feature type="sequence conflict" description="In Ref. 1; AAA99895." evidence="3" ref="1">
    <original>S</original>
    <variation>A</variation>
    <location>
        <position position="476"/>
    </location>
</feature>
<name>KPYK_LACLA</name>
<evidence type="ECO:0000250" key="1"/>
<evidence type="ECO:0000250" key="2">
    <source>
        <dbReference type="UniProtKB" id="P14618"/>
    </source>
</evidence>
<evidence type="ECO:0000305" key="3"/>
<dbReference type="EC" id="2.7.1.40"/>
<dbReference type="EMBL" id="L07920">
    <property type="protein sequence ID" value="AAA99895.1"/>
    <property type="molecule type" value="Genomic_DNA"/>
</dbReference>
<dbReference type="EMBL" id="AE005176">
    <property type="protein sequence ID" value="AAK05430.1"/>
    <property type="molecule type" value="Genomic_DNA"/>
</dbReference>
<dbReference type="PIR" id="B40620">
    <property type="entry name" value="B40620"/>
</dbReference>
<dbReference type="PIR" id="D86791">
    <property type="entry name" value="D86791"/>
</dbReference>
<dbReference type="RefSeq" id="NP_267488.1">
    <property type="nucleotide sequence ID" value="NC_002662.1"/>
</dbReference>
<dbReference type="RefSeq" id="WP_003131076.1">
    <property type="nucleotide sequence ID" value="NC_002662.1"/>
</dbReference>
<dbReference type="SMR" id="Q07637"/>
<dbReference type="MoonProt" id="Q07637"/>
<dbReference type="PaxDb" id="272623-L0003"/>
<dbReference type="EnsemblBacteria" id="AAK05430">
    <property type="protein sequence ID" value="AAK05430"/>
    <property type="gene ID" value="L0003"/>
</dbReference>
<dbReference type="GeneID" id="89633565"/>
<dbReference type="KEGG" id="lla:L0003"/>
<dbReference type="PATRIC" id="fig|272623.7.peg.1439"/>
<dbReference type="eggNOG" id="COG0469">
    <property type="taxonomic scope" value="Bacteria"/>
</dbReference>
<dbReference type="HOGENOM" id="CLU_015439_0_2_9"/>
<dbReference type="OrthoDB" id="9812123at2"/>
<dbReference type="BioCyc" id="MetaCyc:MONOMER-13043"/>
<dbReference type="SABIO-RK" id="Q07637"/>
<dbReference type="UniPathway" id="UPA00109">
    <property type="reaction ID" value="UER00188"/>
</dbReference>
<dbReference type="Proteomes" id="UP000002196">
    <property type="component" value="Chromosome"/>
</dbReference>
<dbReference type="GO" id="GO:0009986">
    <property type="term" value="C:cell surface"/>
    <property type="evidence" value="ECO:0000314"/>
    <property type="project" value="CAFA"/>
</dbReference>
<dbReference type="GO" id="GO:0005524">
    <property type="term" value="F:ATP binding"/>
    <property type="evidence" value="ECO:0007669"/>
    <property type="project" value="UniProtKB-KW"/>
</dbReference>
<dbReference type="GO" id="GO:0016301">
    <property type="term" value="F:kinase activity"/>
    <property type="evidence" value="ECO:0007669"/>
    <property type="project" value="UniProtKB-KW"/>
</dbReference>
<dbReference type="GO" id="GO:0000287">
    <property type="term" value="F:magnesium ion binding"/>
    <property type="evidence" value="ECO:0007669"/>
    <property type="project" value="InterPro"/>
</dbReference>
<dbReference type="GO" id="GO:2001065">
    <property type="term" value="F:mannan binding"/>
    <property type="evidence" value="ECO:0000314"/>
    <property type="project" value="CAFA"/>
</dbReference>
<dbReference type="GO" id="GO:0030955">
    <property type="term" value="F:potassium ion binding"/>
    <property type="evidence" value="ECO:0007669"/>
    <property type="project" value="InterPro"/>
</dbReference>
<dbReference type="GO" id="GO:0004743">
    <property type="term" value="F:pyruvate kinase activity"/>
    <property type="evidence" value="ECO:0000314"/>
    <property type="project" value="CAFA"/>
</dbReference>
<dbReference type="CDD" id="cd00288">
    <property type="entry name" value="Pyruvate_Kinase"/>
    <property type="match status" value="1"/>
</dbReference>
<dbReference type="FunFam" id="3.40.1380.20:FF:000013">
    <property type="entry name" value="Pyruvate kinase"/>
    <property type="match status" value="1"/>
</dbReference>
<dbReference type="Gene3D" id="3.20.20.60">
    <property type="entry name" value="Phosphoenolpyruvate-binding domains"/>
    <property type="match status" value="1"/>
</dbReference>
<dbReference type="Gene3D" id="2.40.33.10">
    <property type="entry name" value="PK beta-barrel domain-like"/>
    <property type="match status" value="1"/>
</dbReference>
<dbReference type="Gene3D" id="3.40.1380.20">
    <property type="entry name" value="Pyruvate kinase, C-terminal domain"/>
    <property type="match status" value="1"/>
</dbReference>
<dbReference type="InterPro" id="IPR001697">
    <property type="entry name" value="Pyr_Knase"/>
</dbReference>
<dbReference type="InterPro" id="IPR015813">
    <property type="entry name" value="Pyrv/PenolPyrv_kinase-like_dom"/>
</dbReference>
<dbReference type="InterPro" id="IPR040442">
    <property type="entry name" value="Pyrv_kinase-like_dom_sf"/>
</dbReference>
<dbReference type="InterPro" id="IPR011037">
    <property type="entry name" value="Pyrv_Knase-like_insert_dom_sf"/>
</dbReference>
<dbReference type="InterPro" id="IPR018209">
    <property type="entry name" value="Pyrv_Knase_AS"/>
</dbReference>
<dbReference type="InterPro" id="IPR015793">
    <property type="entry name" value="Pyrv_Knase_brl"/>
</dbReference>
<dbReference type="InterPro" id="IPR015795">
    <property type="entry name" value="Pyrv_Knase_C"/>
</dbReference>
<dbReference type="InterPro" id="IPR036918">
    <property type="entry name" value="Pyrv_Knase_C_sf"/>
</dbReference>
<dbReference type="InterPro" id="IPR015806">
    <property type="entry name" value="Pyrv_Knase_insert_dom_sf"/>
</dbReference>
<dbReference type="NCBIfam" id="NF004491">
    <property type="entry name" value="PRK05826.1"/>
    <property type="match status" value="1"/>
</dbReference>
<dbReference type="NCBIfam" id="NF004978">
    <property type="entry name" value="PRK06354.1"/>
    <property type="match status" value="1"/>
</dbReference>
<dbReference type="NCBIfam" id="TIGR01064">
    <property type="entry name" value="pyruv_kin"/>
    <property type="match status" value="1"/>
</dbReference>
<dbReference type="PANTHER" id="PTHR11817">
    <property type="entry name" value="PYRUVATE KINASE"/>
    <property type="match status" value="1"/>
</dbReference>
<dbReference type="Pfam" id="PF00224">
    <property type="entry name" value="PK"/>
    <property type="match status" value="1"/>
</dbReference>
<dbReference type="Pfam" id="PF02887">
    <property type="entry name" value="PK_C"/>
    <property type="match status" value="1"/>
</dbReference>
<dbReference type="PRINTS" id="PR01050">
    <property type="entry name" value="PYRUVTKNASE"/>
</dbReference>
<dbReference type="SUPFAM" id="SSF51621">
    <property type="entry name" value="Phosphoenolpyruvate/pyruvate domain"/>
    <property type="match status" value="1"/>
</dbReference>
<dbReference type="SUPFAM" id="SSF50800">
    <property type="entry name" value="PK beta-barrel domain-like"/>
    <property type="match status" value="1"/>
</dbReference>
<dbReference type="SUPFAM" id="SSF52935">
    <property type="entry name" value="PK C-terminal domain-like"/>
    <property type="match status" value="1"/>
</dbReference>
<dbReference type="PROSITE" id="PS00110">
    <property type="entry name" value="PYRUVATE_KINASE"/>
    <property type="match status" value="1"/>
</dbReference>
<comment type="catalytic activity">
    <reaction>
        <text>pyruvate + ATP = phosphoenolpyruvate + ADP + H(+)</text>
        <dbReference type="Rhea" id="RHEA:18157"/>
        <dbReference type="ChEBI" id="CHEBI:15361"/>
        <dbReference type="ChEBI" id="CHEBI:15378"/>
        <dbReference type="ChEBI" id="CHEBI:30616"/>
        <dbReference type="ChEBI" id="CHEBI:58702"/>
        <dbReference type="ChEBI" id="CHEBI:456216"/>
        <dbReference type="EC" id="2.7.1.40"/>
    </reaction>
</comment>
<comment type="cofactor">
    <cofactor>
        <name>Mg(2+)</name>
        <dbReference type="ChEBI" id="CHEBI:18420"/>
    </cofactor>
</comment>
<comment type="cofactor">
    <cofactor>
        <name>K(+)</name>
        <dbReference type="ChEBI" id="CHEBI:29103"/>
    </cofactor>
</comment>
<comment type="activity regulation">
    <text evidence="1">Regulated by phosphoenolpyruvate substrate and is allosterically activated by ribose-5-phosphate, AMP and other nucleoside monophosphates but not by fructose-1,6-bisphosphate.</text>
</comment>
<comment type="pathway">
    <text>Carbohydrate degradation; glycolysis; pyruvate from D-glyceraldehyde 3-phosphate: step 5/5.</text>
</comment>
<comment type="subunit">
    <text evidence="1">Homotetramer.</text>
</comment>
<comment type="similarity">
    <text evidence="3">Belongs to the pyruvate kinase family.</text>
</comment>
<sequence length="502" mass="54255">MNKRVKIVSTLGPAVEIRGGKKFGESGYWGESLDVEASAKNIAALIEEGANVFRFNFSHGDHPEQGARMATVHRAEEIAGHKVGFLLDTKGPEMRTELFADGADAISVVTGDKFRVATKQGLKSTPELIALNVAGGLDIFDDVEIGQTILIDDGKLGLSLTGKDAATREFEVEAQNDGVIGKQKGVNIPNTKIPFPALAERDDADIRFGLSQPGGINFIAISFVRTANDVKEVRRICEETGNPHVQLLAKIENQQGIENLDEIIEAADGIMIARGDMGIEVPFEMVPVYQKLIISKVNKAGKIVVTATNMLESMTYNPRATRSEISDVFNAVIDGTDATMLSGESANGKYPRESVRTMATVNKNAQTMLKEYGRLHPERYDKSTVTEVVAASVKNAAEAMDIKLIVALTESGNTARLISKHRPNADILAITFDEKVERGLMINWGVIPTMTEKPSSTDDMFEVAEKVALASGLVESGDNIIIVAGVPVGTGRTNTMRIRTVK</sequence>
<accession>Q07637</accession>
<gene>
    <name type="primary">pyk</name>
    <name type="ordered locus">LL1332</name>
    <name type="ORF">L0003</name>
</gene>